<gene>
    <name evidence="1" type="primary">murG</name>
    <name type="ordered locus">TP_0523</name>
</gene>
<reference key="1">
    <citation type="journal article" date="1998" name="Science">
        <title>Complete genome sequence of Treponema pallidum, the syphilis spirochete.</title>
        <authorList>
            <person name="Fraser C.M."/>
            <person name="Norris S.J."/>
            <person name="Weinstock G.M."/>
            <person name="White O."/>
            <person name="Sutton G.G."/>
            <person name="Dodson R.J."/>
            <person name="Gwinn M.L."/>
            <person name="Hickey E.K."/>
            <person name="Clayton R.A."/>
            <person name="Ketchum K.A."/>
            <person name="Sodergren E."/>
            <person name="Hardham J.M."/>
            <person name="McLeod M.P."/>
            <person name="Salzberg S.L."/>
            <person name="Peterson J.D."/>
            <person name="Khalak H.G."/>
            <person name="Richardson D.L."/>
            <person name="Howell J.K."/>
            <person name="Chidambaram M."/>
            <person name="Utterback T.R."/>
            <person name="McDonald L.A."/>
            <person name="Artiach P."/>
            <person name="Bowman C."/>
            <person name="Cotton M.D."/>
            <person name="Fujii C."/>
            <person name="Garland S.A."/>
            <person name="Hatch B."/>
            <person name="Horst K."/>
            <person name="Roberts K.M."/>
            <person name="Sandusky M."/>
            <person name="Weidman J.F."/>
            <person name="Smith H.O."/>
            <person name="Venter J.C."/>
        </authorList>
    </citation>
    <scope>NUCLEOTIDE SEQUENCE [LARGE SCALE GENOMIC DNA]</scope>
    <source>
        <strain>Nichols</strain>
    </source>
</reference>
<organism>
    <name type="scientific">Treponema pallidum (strain Nichols)</name>
    <dbReference type="NCBI Taxonomy" id="243276"/>
    <lineage>
        <taxon>Bacteria</taxon>
        <taxon>Pseudomonadati</taxon>
        <taxon>Spirochaetota</taxon>
        <taxon>Spirochaetia</taxon>
        <taxon>Spirochaetales</taxon>
        <taxon>Treponemataceae</taxon>
        <taxon>Treponema</taxon>
    </lineage>
</organism>
<protein>
    <recommendedName>
        <fullName evidence="1">UDP-N-acetylglucosamine--N-acetylmuramyl-(pentapeptide) pyrophosphoryl-undecaprenol N-acetylglucosamine transferase</fullName>
        <ecNumber evidence="1">2.4.1.227</ecNumber>
    </recommendedName>
    <alternativeName>
        <fullName evidence="1">Undecaprenyl-PP-MurNAc-pentapeptide-UDPGlcNAc GlcNAc transferase</fullName>
    </alternativeName>
</protein>
<name>MURG_TREPA</name>
<evidence type="ECO:0000255" key="1">
    <source>
        <dbReference type="HAMAP-Rule" id="MF_00033"/>
    </source>
</evidence>
<proteinExistence type="inferred from homology"/>
<keyword id="KW-0131">Cell cycle</keyword>
<keyword id="KW-0132">Cell division</keyword>
<keyword id="KW-0997">Cell inner membrane</keyword>
<keyword id="KW-1003">Cell membrane</keyword>
<keyword id="KW-0133">Cell shape</keyword>
<keyword id="KW-0961">Cell wall biogenesis/degradation</keyword>
<keyword id="KW-0328">Glycosyltransferase</keyword>
<keyword id="KW-0472">Membrane</keyword>
<keyword id="KW-0573">Peptidoglycan synthesis</keyword>
<keyword id="KW-1185">Reference proteome</keyword>
<keyword id="KW-0808">Transferase</keyword>
<feature type="chain" id="PRO_0000109233" description="UDP-N-acetylglucosamine--N-acetylmuramyl-(pentapeptide) pyrophosphoryl-undecaprenol N-acetylglucosamine transferase">
    <location>
        <begin position="1"/>
        <end position="384"/>
    </location>
</feature>
<feature type="binding site" evidence="1">
    <location>
        <begin position="22"/>
        <end position="24"/>
    </location>
    <ligand>
        <name>UDP-N-acetyl-alpha-D-glucosamine</name>
        <dbReference type="ChEBI" id="CHEBI:57705"/>
    </ligand>
</feature>
<feature type="binding site" evidence="1">
    <location>
        <position position="179"/>
    </location>
    <ligand>
        <name>UDP-N-acetyl-alpha-D-glucosamine</name>
        <dbReference type="ChEBI" id="CHEBI:57705"/>
    </ligand>
</feature>
<feature type="binding site" evidence="1">
    <location>
        <position position="209"/>
    </location>
    <ligand>
        <name>UDP-N-acetyl-alpha-D-glucosamine</name>
        <dbReference type="ChEBI" id="CHEBI:57705"/>
    </ligand>
</feature>
<feature type="binding site" evidence="1">
    <location>
        <position position="312"/>
    </location>
    <ligand>
        <name>UDP-N-acetyl-alpha-D-glucosamine</name>
        <dbReference type="ChEBI" id="CHEBI:57705"/>
    </ligand>
</feature>
<sequence>MRFRARVSQSTAKCVVFTGGGTGGHIFPGIAVFQALAQQAAVRVVWIGAARGADRSIVESAGLEFCGITAGKWRRYASVRNFFDVFRVLVGTVQSYCILRALRPQALFSKGGFVSVPPCIAAWLLRIPVVTHESDISPGLATRINARFADRILVSYPHTSCYFPRARRAAVHCTGNPVRQDFFSAQAERAYQFLRIDQKKPLLTVLGGSSGARDLNARVLSCSTFLTERFYLVHQFGAGNEDQMHTITNSLSVNARHAYMSFPFIQAHLPDILAASALVLSRAGANAVWECAVLGKPMILFPLERGSSRGDQIENAEYFSAHGAACILRAQDEKGHQLVSLLTELFHPSCARIEEMARASYTLGIGNAAYDIAQQLQTFIKEGM</sequence>
<accession>O83535</accession>
<dbReference type="EC" id="2.4.1.227" evidence="1"/>
<dbReference type="EMBL" id="AE000520">
    <property type="protein sequence ID" value="AAC65509.1"/>
    <property type="molecule type" value="Genomic_DNA"/>
</dbReference>
<dbReference type="PIR" id="A71316">
    <property type="entry name" value="A71316"/>
</dbReference>
<dbReference type="RefSeq" id="WP_010881971.1">
    <property type="nucleotide sequence ID" value="NC_021490.2"/>
</dbReference>
<dbReference type="SMR" id="O83535"/>
<dbReference type="STRING" id="243276.TP_0523"/>
<dbReference type="CAZy" id="GT28">
    <property type="family name" value="Glycosyltransferase Family 28"/>
</dbReference>
<dbReference type="EnsemblBacteria" id="AAC65509">
    <property type="protein sequence ID" value="AAC65509"/>
    <property type="gene ID" value="TP_0523"/>
</dbReference>
<dbReference type="GeneID" id="93876292"/>
<dbReference type="KEGG" id="tpa:TP_0523"/>
<dbReference type="KEGG" id="tpw:TPANIC_0523"/>
<dbReference type="eggNOG" id="COG0707">
    <property type="taxonomic scope" value="Bacteria"/>
</dbReference>
<dbReference type="HOGENOM" id="CLU_037404_0_0_12"/>
<dbReference type="OrthoDB" id="9808936at2"/>
<dbReference type="UniPathway" id="UPA00219"/>
<dbReference type="Proteomes" id="UP000000811">
    <property type="component" value="Chromosome"/>
</dbReference>
<dbReference type="GO" id="GO:0005886">
    <property type="term" value="C:plasma membrane"/>
    <property type="evidence" value="ECO:0007669"/>
    <property type="project" value="UniProtKB-SubCell"/>
</dbReference>
<dbReference type="GO" id="GO:0051991">
    <property type="term" value="F:UDP-N-acetyl-D-glucosamine:N-acetylmuramoyl-L-alanyl-D-glutamyl-meso-2,6-diaminopimelyl-D-alanyl-D-alanine-diphosphoundecaprenol 4-beta-N-acetylglucosaminlytransferase activity"/>
    <property type="evidence" value="ECO:0007669"/>
    <property type="project" value="RHEA"/>
</dbReference>
<dbReference type="GO" id="GO:0050511">
    <property type="term" value="F:undecaprenyldiphospho-muramoylpentapeptide beta-N-acetylglucosaminyltransferase activity"/>
    <property type="evidence" value="ECO:0007669"/>
    <property type="project" value="UniProtKB-UniRule"/>
</dbReference>
<dbReference type="GO" id="GO:0005975">
    <property type="term" value="P:carbohydrate metabolic process"/>
    <property type="evidence" value="ECO:0007669"/>
    <property type="project" value="InterPro"/>
</dbReference>
<dbReference type="GO" id="GO:0051301">
    <property type="term" value="P:cell division"/>
    <property type="evidence" value="ECO:0007669"/>
    <property type="project" value="UniProtKB-KW"/>
</dbReference>
<dbReference type="GO" id="GO:0071555">
    <property type="term" value="P:cell wall organization"/>
    <property type="evidence" value="ECO:0007669"/>
    <property type="project" value="UniProtKB-KW"/>
</dbReference>
<dbReference type="GO" id="GO:0030259">
    <property type="term" value="P:lipid glycosylation"/>
    <property type="evidence" value="ECO:0007669"/>
    <property type="project" value="UniProtKB-UniRule"/>
</dbReference>
<dbReference type="GO" id="GO:0009252">
    <property type="term" value="P:peptidoglycan biosynthetic process"/>
    <property type="evidence" value="ECO:0007669"/>
    <property type="project" value="UniProtKB-UniRule"/>
</dbReference>
<dbReference type="GO" id="GO:0008360">
    <property type="term" value="P:regulation of cell shape"/>
    <property type="evidence" value="ECO:0007669"/>
    <property type="project" value="UniProtKB-KW"/>
</dbReference>
<dbReference type="CDD" id="cd03785">
    <property type="entry name" value="GT28_MurG"/>
    <property type="match status" value="1"/>
</dbReference>
<dbReference type="Gene3D" id="3.40.50.2000">
    <property type="entry name" value="Glycogen Phosphorylase B"/>
    <property type="match status" value="2"/>
</dbReference>
<dbReference type="HAMAP" id="MF_00033">
    <property type="entry name" value="MurG"/>
    <property type="match status" value="1"/>
</dbReference>
<dbReference type="InterPro" id="IPR006009">
    <property type="entry name" value="GlcNAc_MurG"/>
</dbReference>
<dbReference type="InterPro" id="IPR007235">
    <property type="entry name" value="Glyco_trans_28_C"/>
</dbReference>
<dbReference type="InterPro" id="IPR004276">
    <property type="entry name" value="GlycoTrans_28_N"/>
</dbReference>
<dbReference type="NCBIfam" id="TIGR01133">
    <property type="entry name" value="murG"/>
    <property type="match status" value="1"/>
</dbReference>
<dbReference type="PANTHER" id="PTHR21015:SF27">
    <property type="entry name" value="UDP-N-ACETYLGLUCOSAMINE--N-ACETYLMURAMYL-(PENTAPEPTIDE) PYROPHOSPHORYL-UNDECAPRENOL N-ACETYLGLUCOSAMINE TRANSFERASE"/>
    <property type="match status" value="1"/>
</dbReference>
<dbReference type="PANTHER" id="PTHR21015">
    <property type="entry name" value="UDP-N-ACETYLGLUCOSAMINE--N-ACETYLMURAMYL-(PENTAPEPTIDE) PYROPHOSPHORYL-UNDECAPRENOL N-ACETYLGLUCOSAMINE TRANSFERASE 1"/>
    <property type="match status" value="1"/>
</dbReference>
<dbReference type="Pfam" id="PF04101">
    <property type="entry name" value="Glyco_tran_28_C"/>
    <property type="match status" value="1"/>
</dbReference>
<dbReference type="Pfam" id="PF03033">
    <property type="entry name" value="Glyco_transf_28"/>
    <property type="match status" value="1"/>
</dbReference>
<dbReference type="SUPFAM" id="SSF53756">
    <property type="entry name" value="UDP-Glycosyltransferase/glycogen phosphorylase"/>
    <property type="match status" value="1"/>
</dbReference>
<comment type="function">
    <text evidence="1">Cell wall formation. Catalyzes the transfer of a GlcNAc subunit on undecaprenyl-pyrophosphoryl-MurNAc-pentapeptide (lipid intermediate I) to form undecaprenyl-pyrophosphoryl-MurNAc-(pentapeptide)GlcNAc (lipid intermediate II).</text>
</comment>
<comment type="catalytic activity">
    <reaction evidence="1">
        <text>di-trans,octa-cis-undecaprenyl diphospho-N-acetyl-alpha-D-muramoyl-L-alanyl-D-glutamyl-meso-2,6-diaminopimeloyl-D-alanyl-D-alanine + UDP-N-acetyl-alpha-D-glucosamine = di-trans,octa-cis-undecaprenyl diphospho-[N-acetyl-alpha-D-glucosaminyl-(1-&gt;4)]-N-acetyl-alpha-D-muramoyl-L-alanyl-D-glutamyl-meso-2,6-diaminopimeloyl-D-alanyl-D-alanine + UDP + H(+)</text>
        <dbReference type="Rhea" id="RHEA:31227"/>
        <dbReference type="ChEBI" id="CHEBI:15378"/>
        <dbReference type="ChEBI" id="CHEBI:57705"/>
        <dbReference type="ChEBI" id="CHEBI:58223"/>
        <dbReference type="ChEBI" id="CHEBI:61387"/>
        <dbReference type="ChEBI" id="CHEBI:61388"/>
        <dbReference type="EC" id="2.4.1.227"/>
    </reaction>
</comment>
<comment type="pathway">
    <text evidence="1">Cell wall biogenesis; peptidoglycan biosynthesis.</text>
</comment>
<comment type="subcellular location">
    <subcellularLocation>
        <location evidence="1">Cell inner membrane</location>
        <topology evidence="1">Peripheral membrane protein</topology>
        <orientation evidence="1">Cytoplasmic side</orientation>
    </subcellularLocation>
</comment>
<comment type="similarity">
    <text evidence="1">Belongs to the glycosyltransferase 28 family. MurG subfamily.</text>
</comment>